<sequence length="404" mass="46805">MPTDEPSKRKSILPTIPTSLMLKKSNEALSDFERTFNDRVMDIFAENRRIDVEEFKKNAECFLNIIRSNKIDLNWGEGGESRYVTITRLMKILKTSPQSIKDLLPHNTVSNFVKITNYNLTIDITLLEELVRTVIHAEESYIKLLPFSENSTEISSYSLQDFVATHFIPIMIEEPENPVYYTAYAVGTIFFLLGARRRDCVYLKDLLASTLLLQLEECIHAENHCLSPPKIDVFTVAQFRTTLSEFRFLDSQRKGLLAPADLKFFRDGIFNEVFTKRIFEISITYEDGRIDFKAFVDFVTALKFRHTTASAKYHFEILDLKDDGLLDEEEIRSISSFQLQNLPDYVPEDNSVNPEVATAELRDMMRLNQNGITLEEFLANRMNSTFAGFLSNSDDYMKYERREQ</sequence>
<protein>
    <recommendedName>
        <fullName evidence="4">Serine/threonine-protein phosphatase 2A regulatory subunit rsa-1</fullName>
    </recommendedName>
    <alternativeName>
        <fullName evidence="3">Regulator of spindle assembly protein 1</fullName>
    </alternativeName>
    <alternativeName>
        <fullName evidence="4">Serine/threonine-protein phosphatase 2A 72kDa regulatory subunit rsa-1</fullName>
    </alternativeName>
    <alternativeName>
        <fullName evidence="4">Serine/threonine-protein phosphatase 2A regulatory subunit B'' rsa-1</fullName>
    </alternativeName>
</protein>
<dbReference type="EMBL" id="BX284601">
    <property type="protein sequence ID" value="CAB02769.1"/>
    <property type="molecule type" value="Genomic_DNA"/>
</dbReference>
<dbReference type="EMBL" id="BX284601">
    <property type="protein sequence ID" value="CAN99683.1"/>
    <property type="molecule type" value="Genomic_DNA"/>
</dbReference>
<dbReference type="PIR" id="T19445">
    <property type="entry name" value="T19445"/>
</dbReference>
<dbReference type="RefSeq" id="NP_001122424.1">
    <molecule id="O02217-2"/>
    <property type="nucleotide sequence ID" value="NM_001128952.4"/>
</dbReference>
<dbReference type="RefSeq" id="NP_492683.1">
    <molecule id="O02217-1"/>
    <property type="nucleotide sequence ID" value="NM_060282.7"/>
</dbReference>
<dbReference type="ComplexPortal" id="CPX-1357">
    <property type="entry name" value="RSA centrosome-targeting complex"/>
</dbReference>
<dbReference type="ComplexPortal" id="CPX-1361">
    <property type="entry name" value="PP2A-RSA-1 phosphatase complex"/>
</dbReference>
<dbReference type="FunCoup" id="O02217">
    <property type="interactions" value="105"/>
</dbReference>
<dbReference type="IntAct" id="O02217">
    <property type="interactions" value="6"/>
</dbReference>
<dbReference type="STRING" id="6239.C25A1.9a.1"/>
<dbReference type="PaxDb" id="6239-C25A1.9a"/>
<dbReference type="EnsemblMetazoa" id="C25A1.9a.1">
    <molecule id="O02217-1"/>
    <property type="protein sequence ID" value="C25A1.9a.1"/>
    <property type="gene ID" value="WBGene00007710"/>
</dbReference>
<dbReference type="EnsemblMetazoa" id="C25A1.9b.1">
    <molecule id="O02217-2"/>
    <property type="protein sequence ID" value="C25A1.9b.1"/>
    <property type="gene ID" value="WBGene00007710"/>
</dbReference>
<dbReference type="GeneID" id="172886"/>
<dbReference type="KEGG" id="cel:CELE_C25A1.9"/>
<dbReference type="UCSC" id="C25A1.9a">
    <property type="organism name" value="c. elegans"/>
</dbReference>
<dbReference type="AGR" id="WB:WBGene00007710"/>
<dbReference type="CTD" id="172886"/>
<dbReference type="WormBase" id="C25A1.9a">
    <molecule id="O02217-1"/>
    <property type="protein sequence ID" value="CE18532"/>
    <property type="gene ID" value="WBGene00007710"/>
    <property type="gene designation" value="rsa-1"/>
</dbReference>
<dbReference type="WormBase" id="C25A1.9b">
    <molecule id="O02217-2"/>
    <property type="protein sequence ID" value="CE08375"/>
    <property type="gene ID" value="WBGene00007710"/>
    <property type="gene designation" value="rsa-1"/>
</dbReference>
<dbReference type="eggNOG" id="KOG2562">
    <property type="taxonomic scope" value="Eukaryota"/>
</dbReference>
<dbReference type="HOGENOM" id="CLU_681942_0_0_1"/>
<dbReference type="InParanoid" id="O02217"/>
<dbReference type="OMA" id="ASAKYHF"/>
<dbReference type="OrthoDB" id="10265007at2759"/>
<dbReference type="PhylomeDB" id="O02217"/>
<dbReference type="SignaLink" id="O02217"/>
<dbReference type="CD-CODE" id="1E117272">
    <property type="entry name" value="Centrosome"/>
</dbReference>
<dbReference type="PRO" id="PR:O02217"/>
<dbReference type="Proteomes" id="UP000001940">
    <property type="component" value="Chromosome I"/>
</dbReference>
<dbReference type="Bgee" id="WBGene00007710">
    <property type="expression patterns" value="Expressed in germ line (C elegans) and 4 other cell types or tissues"/>
</dbReference>
<dbReference type="GO" id="GO:0005813">
    <property type="term" value="C:centrosome"/>
    <property type="evidence" value="ECO:0000314"/>
    <property type="project" value="WormBase"/>
</dbReference>
<dbReference type="GO" id="GO:0005737">
    <property type="term" value="C:cytoplasm"/>
    <property type="evidence" value="ECO:0007669"/>
    <property type="project" value="UniProtKB-KW"/>
</dbReference>
<dbReference type="GO" id="GO:0000159">
    <property type="term" value="C:protein phosphatase type 2A complex"/>
    <property type="evidence" value="ECO:0000314"/>
    <property type="project" value="ComplexPortal"/>
</dbReference>
<dbReference type="GO" id="GO:0051721">
    <property type="term" value="F:protein phosphatase 2A binding"/>
    <property type="evidence" value="ECO:0000353"/>
    <property type="project" value="WormBase"/>
</dbReference>
<dbReference type="GO" id="GO:0030865">
    <property type="term" value="P:cortical cytoskeleton organization"/>
    <property type="evidence" value="ECO:0000318"/>
    <property type="project" value="GO_Central"/>
</dbReference>
<dbReference type="GO" id="GO:0009792">
    <property type="term" value="P:embryo development ending in birth or egg hatching"/>
    <property type="evidence" value="ECO:0000315"/>
    <property type="project" value="WormBase"/>
</dbReference>
<dbReference type="GO" id="GO:0000226">
    <property type="term" value="P:microtubule cytoskeleton organization"/>
    <property type="evidence" value="ECO:0000318"/>
    <property type="project" value="GO_Central"/>
</dbReference>
<dbReference type="GO" id="GO:0090307">
    <property type="term" value="P:mitotic spindle assembly"/>
    <property type="evidence" value="ECO:0000315"/>
    <property type="project" value="WormBase"/>
</dbReference>
<dbReference type="GO" id="GO:0007052">
    <property type="term" value="P:mitotic spindle organization"/>
    <property type="evidence" value="ECO:0000315"/>
    <property type="project" value="WormBase"/>
</dbReference>
<dbReference type="GO" id="GO:0045579">
    <property type="term" value="P:positive regulation of B cell differentiation"/>
    <property type="evidence" value="ECO:0000318"/>
    <property type="project" value="GO_Central"/>
</dbReference>
<dbReference type="GO" id="GO:0033365">
    <property type="term" value="P:protein localization to organelle"/>
    <property type="evidence" value="ECO:0000315"/>
    <property type="project" value="WormBase"/>
</dbReference>
<dbReference type="GO" id="GO:0035303">
    <property type="term" value="P:regulation of dephosphorylation"/>
    <property type="evidence" value="ECO:0007669"/>
    <property type="project" value="InterPro"/>
</dbReference>
<dbReference type="Gene3D" id="1.10.238.10">
    <property type="entry name" value="EF-hand"/>
    <property type="match status" value="1"/>
</dbReference>
<dbReference type="InterPro" id="IPR011992">
    <property type="entry name" value="EF-hand-dom_pair"/>
</dbReference>
<dbReference type="InterPro" id="IPR039865">
    <property type="entry name" value="PPP2R3C"/>
</dbReference>
<dbReference type="PANTHER" id="PTHR12085">
    <property type="entry name" value="SERINE/THREONINE-PROTEIN PHOSPHATASE 2A REGULATORY SUBUNIT B'' SUBUNIT GAMMA"/>
    <property type="match status" value="1"/>
</dbReference>
<dbReference type="PANTHER" id="PTHR12085:SF3">
    <property type="entry name" value="SERINE_THREONINE-PROTEIN PHOSPHATASE 2A REGULATORY SUBUNIT B'' SUBUNIT GAMMA"/>
    <property type="match status" value="1"/>
</dbReference>
<dbReference type="SUPFAM" id="SSF47473">
    <property type="entry name" value="EF-hand"/>
    <property type="match status" value="1"/>
</dbReference>
<name>P2R31_CAEEL</name>
<evidence type="ECO:0000269" key="1">
    <source>
    </source>
</evidence>
<evidence type="ECO:0000269" key="2">
    <source>
    </source>
</evidence>
<evidence type="ECO:0000303" key="3">
    <source>
    </source>
</evidence>
<evidence type="ECO:0000305" key="4"/>
<evidence type="ECO:0000312" key="5">
    <source>
        <dbReference type="Proteomes" id="UP000001940"/>
    </source>
</evidence>
<evidence type="ECO:0000312" key="6">
    <source>
        <dbReference type="WormBase" id="C25A1.9a"/>
    </source>
</evidence>
<evidence type="ECO:0000312" key="7">
    <source>
        <dbReference type="WormBase" id="C25A1.9b"/>
    </source>
</evidence>
<feature type="chain" id="PRO_0000437753" description="Serine/threonine-protein phosphatase 2A regulatory subunit rsa-1" evidence="4">
    <location>
        <begin position="1"/>
        <end position="404"/>
    </location>
</feature>
<feature type="splice variant" id="VSP_058569" description="In isoform b." evidence="4">
    <location>
        <begin position="335"/>
        <end position="338"/>
    </location>
</feature>
<feature type="mutagenesis site" description="In or598; embryonic lethal. Defects in mitotic spindle formation and reduced paa-1 levels at mitotic centrosomes with normal rsa-1 centrosome localization. May prevent interaction with paa-1." evidence="2">
    <original>D</original>
    <variation>G</variation>
    <location>
        <position position="319"/>
    </location>
</feature>
<comment type="function">
    <text evidence="1 2">Regulatory subunit of phosphatase let-92 which recruits let-92/paa-1 complex to the centrosomes, thereby regulating microtubule outgrowth from centrosomes and mitotic spindle assembly ensuring the stability of kinetochore microtubules.</text>
</comment>
<comment type="subunit">
    <text evidence="1">Part of a complex consisting of a common heterodimeric core enzyme, composed of catalytic subunit let-92 and constant regulatory subunit paa-1, that associates with a variety of regulatory subunits which confer distinct properties to the holoenzyme. Interacts with rsa-2, spd-5 and tpxl-1.</text>
</comment>
<comment type="interaction">
    <interactant intactId="EBI-1187455">
        <id>O02217</id>
    </interactant>
    <interactant intactId="EBI-1187461">
        <id>G5EFV3</id>
        <label>rsa-2</label>
    </interactant>
    <organismsDiffer>false</organismsDiffer>
    <experiments>5</experiments>
</comment>
<comment type="subcellular location">
    <subcellularLocation>
        <location evidence="1 2">Cytoplasm</location>
        <location evidence="1 2">Cytoskeleton</location>
        <location evidence="1 2">Microtubule organizing center</location>
        <location evidence="1 2">Centrosome</location>
    </subcellularLocation>
</comment>
<comment type="alternative products">
    <event type="alternative splicing"/>
    <isoform>
        <id>O02217-1</id>
        <name evidence="6">a</name>
        <sequence type="displayed"/>
    </isoform>
    <isoform>
        <id>O02217-2</id>
        <name evidence="7">b</name>
        <sequence type="described" ref="VSP_058569"/>
    </isoform>
</comment>
<comment type="disruption phenotype">
    <text evidence="1">RNAi-mediated knockdown causes defects in spindle assembly characterized by kinetochore microtubule instability and a reduction in centrosomal microtubules, a decrease in outgrowth of microtubule plus ends from centrosomes. tpxl-1 recruitment to centrosomes is reduced whereas microtubule-depolymerizing kinesin klp-7 recruitment is increased.</text>
</comment>
<organism evidence="5">
    <name type="scientific">Caenorhabditis elegans</name>
    <dbReference type="NCBI Taxonomy" id="6239"/>
    <lineage>
        <taxon>Eukaryota</taxon>
        <taxon>Metazoa</taxon>
        <taxon>Ecdysozoa</taxon>
        <taxon>Nematoda</taxon>
        <taxon>Chromadorea</taxon>
        <taxon>Rhabditida</taxon>
        <taxon>Rhabditina</taxon>
        <taxon>Rhabditomorpha</taxon>
        <taxon>Rhabditoidea</taxon>
        <taxon>Rhabditidae</taxon>
        <taxon>Peloderinae</taxon>
        <taxon>Caenorhabditis</taxon>
    </lineage>
</organism>
<proteinExistence type="evidence at protein level"/>
<accession>O02217</accession>
<accession>A5Z2U4</accession>
<reference evidence="5" key="1">
    <citation type="journal article" date="1998" name="Science">
        <title>Genome sequence of the nematode C. elegans: a platform for investigating biology.</title>
        <authorList>
            <consortium name="The C. elegans sequencing consortium"/>
        </authorList>
    </citation>
    <scope>NUCLEOTIDE SEQUENCE [LARGE SCALE GENOMIC DNA]</scope>
    <source>
        <strain evidence="5">Bristol N2</strain>
    </source>
</reference>
<reference evidence="4" key="2">
    <citation type="journal article" date="2007" name="Cell">
        <title>The C. elegans RSA complex localizes protein phosphatase 2A to centrosomes and regulates mitotic spindle assembly.</title>
        <authorList>
            <person name="Schlaitz A.L."/>
            <person name="Srayko M."/>
            <person name="Dammermann A."/>
            <person name="Quintin S."/>
            <person name="Wielsch N."/>
            <person name="MacLeod I."/>
            <person name="de Robillard Q."/>
            <person name="Zinke A."/>
            <person name="Yates J.R. III"/>
            <person name="Mueller-Reichert T."/>
            <person name="Shevchenko A."/>
            <person name="Oegema K."/>
            <person name="Hyman A.A."/>
        </authorList>
    </citation>
    <scope>FUNCTION</scope>
    <scope>INTERACTION WITH LET-92; PAA-1; RSA-2; SPD-5 AND TPXL-1</scope>
    <scope>SUBCELLULAR LOCATION</scope>
    <scope>DISRUPTION PHENOTYPE</scope>
</reference>
<reference evidence="4" key="3">
    <citation type="journal article" date="2013" name="Biol. Open">
        <title>Suppressor mutations identify amino acids in PAA-1/PR65 that facilitate regulatory RSA-1/B'' subunit targeting of PP2A to centrosomes in C. elegans.</title>
        <authorList>
            <person name="Lange K.I."/>
            <person name="Heinrichs J."/>
            <person name="Cheung K."/>
            <person name="Srayko M."/>
        </authorList>
    </citation>
    <scope>FUNCTION</scope>
    <scope>SUBCELLULAR LOCATION</scope>
    <scope>MUTAGENESIS OF ASP-319</scope>
</reference>
<keyword id="KW-0025">Alternative splicing</keyword>
<keyword id="KW-0131">Cell cycle</keyword>
<keyword id="KW-0963">Cytoplasm</keyword>
<keyword id="KW-0206">Cytoskeleton</keyword>
<keyword id="KW-1185">Reference proteome</keyword>
<gene>
    <name evidence="6" type="primary">rsa-1</name>
    <name evidence="6" type="ORF">C25A1.9</name>
</gene>